<protein>
    <recommendedName>
        <fullName evidence="1">ATP synthase peripheral stalk subunit d, mitochondrial</fullName>
        <shortName>ATPase subunit d</shortName>
    </recommendedName>
    <alternativeName>
        <fullName evidence="6">ATP synthase peripheral stalk subunit d</fullName>
    </alternativeName>
</protein>
<reference key="1">
    <citation type="journal article" date="1992" name="Biochem. Biophys. Res. Commun.">
        <title>cDNA cloning for and preparation of antibodies against subunit d of H(+)-ATP synthase in rat mitochondria.</title>
        <authorList>
            <person name="Motojima K."/>
            <person name="Imanaka T."/>
        </authorList>
    </citation>
    <scope>NUCLEOTIDE SEQUENCE [MRNA]</scope>
    <source>
        <tissue>Brain</tissue>
    </source>
</reference>
<reference key="2">
    <citation type="journal article" date="1993" name="J. Biochem.">
        <title>The complete amino acid sequence of subunit d of rat liver mitochondrial H(+)-ATP synthase.</title>
        <authorList>
            <person name="Higuti T."/>
            <person name="Kuroiwa K."/>
            <person name="Miyazaki S."/>
            <person name="Toda H."/>
            <person name="Kakuno T."/>
            <person name="Sakiyama F."/>
        </authorList>
    </citation>
    <scope>NUCLEOTIDE SEQUENCE [MRNA]</scope>
    <source>
        <tissue>Liver</tissue>
    </source>
</reference>
<reference key="3">
    <citation type="journal article" date="2004" name="Genome Res.">
        <title>The status, quality, and expansion of the NIH full-length cDNA project: the Mammalian Gene Collection (MGC).</title>
        <authorList>
            <consortium name="The MGC Project Team"/>
        </authorList>
    </citation>
    <scope>NUCLEOTIDE SEQUENCE [LARGE SCALE MRNA]</scope>
    <source>
        <tissue>Pituitary</tissue>
        <tissue>Testis</tissue>
    </source>
</reference>
<reference key="4">
    <citation type="submission" date="2007-07" db="UniProtKB">
        <authorList>
            <person name="Lubec G."/>
            <person name="Afjehi-Sadat L."/>
            <person name="Kang S.U."/>
        </authorList>
    </citation>
    <scope>PROTEIN SEQUENCE OF 33-41; 59-71; 79-95; 100-111 AND 149-161</scope>
    <scope>IDENTIFICATION BY MASS SPECTROMETRY</scope>
    <source>
        <strain>Sprague-Dawley</strain>
        <tissue>Brain</tissue>
        <tissue>Spinal cord</tissue>
    </source>
</reference>
<reference key="5">
    <citation type="journal article" date="2007" name="Mol. Cell. Proteomics">
        <title>Identification of two proteins associated with mammalian ATP synthase.</title>
        <authorList>
            <person name="Meyer B."/>
            <person name="Wittig I."/>
            <person name="Trifilieff E."/>
            <person name="Karas M."/>
            <person name="Schaegger H."/>
        </authorList>
    </citation>
    <scope>IDENTIFICATION BY MASS SPECTROMETRY</scope>
    <scope>IDENTIFICATION IN THE ATP SYNTHASE COMPLEX</scope>
</reference>
<gene>
    <name evidence="7" type="primary">Atp5pd</name>
    <name type="synonym">Atp5h</name>
    <name type="synonym">Atp5jd</name>
</gene>
<evidence type="ECO:0000250" key="1">
    <source>
        <dbReference type="UniProtKB" id="O75947"/>
    </source>
</evidence>
<evidence type="ECO:0000250" key="2">
    <source>
        <dbReference type="UniProtKB" id="P13620"/>
    </source>
</evidence>
<evidence type="ECO:0000250" key="3">
    <source>
        <dbReference type="UniProtKB" id="P19483"/>
    </source>
</evidence>
<evidence type="ECO:0000250" key="4">
    <source>
        <dbReference type="UniProtKB" id="Q9DCX2"/>
    </source>
</evidence>
<evidence type="ECO:0000269" key="5">
    <source>
    </source>
</evidence>
<evidence type="ECO:0000305" key="6"/>
<evidence type="ECO:0000312" key="7">
    <source>
        <dbReference type="RGD" id="620083"/>
    </source>
</evidence>
<organism>
    <name type="scientific">Rattus norvegicus</name>
    <name type="common">Rat</name>
    <dbReference type="NCBI Taxonomy" id="10116"/>
    <lineage>
        <taxon>Eukaryota</taxon>
        <taxon>Metazoa</taxon>
        <taxon>Chordata</taxon>
        <taxon>Craniata</taxon>
        <taxon>Vertebrata</taxon>
        <taxon>Euteleostomi</taxon>
        <taxon>Mammalia</taxon>
        <taxon>Eutheria</taxon>
        <taxon>Euarchontoglires</taxon>
        <taxon>Glires</taxon>
        <taxon>Rodentia</taxon>
        <taxon>Myomorpha</taxon>
        <taxon>Muroidea</taxon>
        <taxon>Muridae</taxon>
        <taxon>Murinae</taxon>
        <taxon>Rattus</taxon>
    </lineage>
</organism>
<sequence length="161" mass="18763">MAGRKLALKTIDWVSFVEIMPQNQKAIGNALKSWNETFHTRLASLSEKPPAIDWAYYRANVDKPGLVDDFKNKYNALKIPVPEDKYTALVDAEEKEDVKNCAQFVTGSQARVREYEKQLEKIKNMIPFDQMTIDDLNEVFPETKLDKRKYPYWPHQPIENL</sequence>
<comment type="function">
    <text evidence="1 2 3">Subunit d, of the mitochondrial membrane ATP synthase complex (F(1)F(0) ATP synthase or Complex V) that produces ATP from ADP in the presence of a proton gradient across the membrane which is generated by electron transport complexes of the respiratory chain. ATP synthase complex consist of a soluble F(1) head domain - the catalytic core - and a membrane F(1) domain - the membrane proton channel. These two domains are linked by a central stalk rotating inside the F(1) region and a stationary peripheral stalk. During catalysis, ATP synthesis in the catalytic domain of F(1) is coupled via a rotary mechanism of the central stalk subunits to proton translocation (By similarity). In vivo, can only synthesize ATP although its ATP hydrolase activity can be activated artificially in vitro (By similarity). Part of the complex F(0) domain (By similarity). Part of the complex F(0) domain and the peripheric stalk, which acts as a stator to hold the catalytic alpha(3)beta(3) subcomplex and subunit a/ATP6 static relative to the rotary elements (By similarity).</text>
</comment>
<comment type="subunit">
    <text evidence="1 4 5">Component of the ATP synthase complex composed at least of ATP5F1A/subunit alpha, ATP5F1B/subunit beta, ATP5MC1/subunit c (homooctomer), MT-ATP6/subunit a, MT-ATP8/subunit 8, ATP5ME/subunit e, ATP5MF/subunit f, ATP5MG/subunit g, ATP5MK/subunit k, ATP5MJ/subunit j, ATP5F1C/subunit gamma, ATP5F1D/subunit delta, ATP5F1E/subunit epsilon, ATP5PF/subunit F6, ATP5PB/subunit b, ATP5PD/subunit d, ATP5PO/subunit OSCP (PubMed:17575325). ATP synthase complex consists of a soluble F(1) head domain (subunits alpha(3) and beta(3)) - the catalytic core - and a membrane F(0) domain - the membrane proton channel (subunits c, a, 8, e, f, g, k and j). These two domains are linked by a central stalk (subunits gamma, delta, and epsilon) rotating inside the F1 region and a stationary peripheral stalk (subunits F6, b, d, and OSCP) (By similarity). Interacts with FLVCR2; this interaction occurs in the absence of heme and is disrupted upon heme binding (By similarity).</text>
</comment>
<comment type="subcellular location">
    <subcellularLocation>
        <location>Mitochondrion</location>
    </subcellularLocation>
    <subcellularLocation>
        <location>Mitochondrion inner membrane</location>
    </subcellularLocation>
</comment>
<comment type="similarity">
    <text evidence="6">Belongs to the ATPase d subunit family.</text>
</comment>
<dbReference type="EMBL" id="D10021">
    <property type="protein sequence ID" value="BAA00911.1"/>
    <property type="molecule type" value="mRNA"/>
</dbReference>
<dbReference type="EMBL" id="D13120">
    <property type="protein sequence ID" value="BAA02422.1"/>
    <property type="molecule type" value="mRNA"/>
</dbReference>
<dbReference type="EMBL" id="BC059139">
    <property type="protein sequence ID" value="AAH59139.1"/>
    <property type="molecule type" value="mRNA"/>
</dbReference>
<dbReference type="EMBL" id="BC078846">
    <property type="protein sequence ID" value="AAH78846.1"/>
    <property type="molecule type" value="mRNA"/>
</dbReference>
<dbReference type="PIR" id="JS0739">
    <property type="entry name" value="JS0739"/>
</dbReference>
<dbReference type="RefSeq" id="NP_062256.1">
    <property type="nucleotide sequence ID" value="NM_019383.2"/>
</dbReference>
<dbReference type="RefSeq" id="XP_038942713.1">
    <property type="nucleotide sequence ID" value="XM_039086785.2"/>
</dbReference>
<dbReference type="SMR" id="P31399"/>
<dbReference type="BioGRID" id="566012">
    <property type="interactions" value="4"/>
</dbReference>
<dbReference type="CORUM" id="P31399"/>
<dbReference type="FunCoup" id="P31399">
    <property type="interactions" value="2420"/>
</dbReference>
<dbReference type="IntAct" id="P31399">
    <property type="interactions" value="2"/>
</dbReference>
<dbReference type="MINT" id="P31399"/>
<dbReference type="STRING" id="10116.ENSRNOP00000004836"/>
<dbReference type="CarbonylDB" id="P31399"/>
<dbReference type="GlyGen" id="P31399">
    <property type="glycosylation" value="1 site, 1 O-linked glycan (1 site)"/>
</dbReference>
<dbReference type="iPTMnet" id="P31399"/>
<dbReference type="PhosphoSitePlus" id="P31399"/>
<dbReference type="jPOST" id="P31399"/>
<dbReference type="PaxDb" id="10116-ENSRNOP00000004836"/>
<dbReference type="GeneID" id="641434"/>
<dbReference type="KEGG" id="rno:641434"/>
<dbReference type="AGR" id="RGD:620083"/>
<dbReference type="CTD" id="10476"/>
<dbReference type="RGD" id="620083">
    <property type="gene designation" value="Atp5pd"/>
</dbReference>
<dbReference type="VEuPathDB" id="HostDB:ENSRNOG00000003626"/>
<dbReference type="eggNOG" id="KOG3366">
    <property type="taxonomic scope" value="Eukaryota"/>
</dbReference>
<dbReference type="HOGENOM" id="CLU_130600_0_0_1"/>
<dbReference type="InParanoid" id="P31399"/>
<dbReference type="PhylomeDB" id="P31399"/>
<dbReference type="Reactome" id="R-RNO-163210">
    <property type="pathway name" value="Formation of ATP by chemiosmotic coupling"/>
</dbReference>
<dbReference type="Reactome" id="R-RNO-8949613">
    <property type="pathway name" value="Cristae formation"/>
</dbReference>
<dbReference type="Reactome" id="R-RNO-9837999">
    <property type="pathway name" value="Mitochondrial protein degradation"/>
</dbReference>
<dbReference type="PRO" id="PR:P31399"/>
<dbReference type="Proteomes" id="UP000002494">
    <property type="component" value="Chromosome 10"/>
</dbReference>
<dbReference type="Bgee" id="ENSRNOG00000003626">
    <property type="expression patterns" value="Expressed in heart and 19 other cell types or tissues"/>
</dbReference>
<dbReference type="GO" id="GO:0005743">
    <property type="term" value="C:mitochondrial inner membrane"/>
    <property type="evidence" value="ECO:0000266"/>
    <property type="project" value="RGD"/>
</dbReference>
<dbReference type="GO" id="GO:0005739">
    <property type="term" value="C:mitochondrion"/>
    <property type="evidence" value="ECO:0000266"/>
    <property type="project" value="RGD"/>
</dbReference>
<dbReference type="GO" id="GO:0045259">
    <property type="term" value="C:proton-transporting ATP synthase complex"/>
    <property type="evidence" value="ECO:0000314"/>
    <property type="project" value="UniProtKB"/>
</dbReference>
<dbReference type="GO" id="GO:0044877">
    <property type="term" value="F:protein-containing complex binding"/>
    <property type="evidence" value="ECO:0000314"/>
    <property type="project" value="RGD"/>
</dbReference>
<dbReference type="GO" id="GO:0015078">
    <property type="term" value="F:proton transmembrane transporter activity"/>
    <property type="evidence" value="ECO:0007669"/>
    <property type="project" value="InterPro"/>
</dbReference>
<dbReference type="GO" id="GO:1901653">
    <property type="term" value="P:cellular response to peptide"/>
    <property type="evidence" value="ECO:0000270"/>
    <property type="project" value="RGD"/>
</dbReference>
<dbReference type="GO" id="GO:0015986">
    <property type="term" value="P:proton motive force-driven ATP synthesis"/>
    <property type="evidence" value="ECO:0000318"/>
    <property type="project" value="GO_Central"/>
</dbReference>
<dbReference type="GO" id="GO:0042776">
    <property type="term" value="P:proton motive force-driven mitochondrial ATP synthesis"/>
    <property type="evidence" value="ECO:0000266"/>
    <property type="project" value="RGD"/>
</dbReference>
<dbReference type="Gene3D" id="6.10.280.70">
    <property type="match status" value="1"/>
</dbReference>
<dbReference type="InterPro" id="IPR008689">
    <property type="entry name" value="ATP_synth_F0_dsu_mt"/>
</dbReference>
<dbReference type="InterPro" id="IPR036228">
    <property type="entry name" value="ATP_synth_F0_dsu_sf_mt"/>
</dbReference>
<dbReference type="PANTHER" id="PTHR12700">
    <property type="entry name" value="ATP SYNTHASE SUBUNIT D, MITOCHONDRIAL"/>
    <property type="match status" value="1"/>
</dbReference>
<dbReference type="Pfam" id="PF05873">
    <property type="entry name" value="Mt_ATP-synt_D"/>
    <property type="match status" value="1"/>
</dbReference>
<dbReference type="PIRSF" id="PIRSF005514">
    <property type="entry name" value="ATPase_F0_D_mt"/>
    <property type="match status" value="1"/>
</dbReference>
<dbReference type="SUPFAM" id="SSF161065">
    <property type="entry name" value="ATP synthase D chain-like"/>
    <property type="match status" value="1"/>
</dbReference>
<keyword id="KW-0007">Acetylation</keyword>
<keyword id="KW-0138">CF(0)</keyword>
<keyword id="KW-0903">Direct protein sequencing</keyword>
<keyword id="KW-0375">Hydrogen ion transport</keyword>
<keyword id="KW-0406">Ion transport</keyword>
<keyword id="KW-0472">Membrane</keyword>
<keyword id="KW-0496">Mitochondrion</keyword>
<keyword id="KW-0999">Mitochondrion inner membrane</keyword>
<keyword id="KW-1185">Reference proteome</keyword>
<keyword id="KW-0813">Transport</keyword>
<accession>P31399</accession>
<name>ATP5H_RAT</name>
<feature type="initiator methionine" description="Removed" evidence="2">
    <location>
        <position position="1"/>
    </location>
</feature>
<feature type="chain" id="PRO_0000071675" description="ATP synthase peripheral stalk subunit d, mitochondrial">
    <location>
        <begin position="2"/>
        <end position="161"/>
    </location>
</feature>
<feature type="modified residue" description="N-acetylalanine" evidence="2">
    <location>
        <position position="2"/>
    </location>
</feature>
<feature type="modified residue" description="N6-acetyllysine" evidence="4">
    <location>
        <position position="32"/>
    </location>
</feature>
<feature type="modified residue" description="N6-acetyllysine" evidence="4">
    <location>
        <position position="48"/>
    </location>
</feature>
<feature type="modified residue" description="N6-acetyllysine" evidence="4">
    <location>
        <position position="63"/>
    </location>
</feature>
<feature type="modified residue" description="N6-acetyllysine; alternate" evidence="4">
    <location>
        <position position="78"/>
    </location>
</feature>
<feature type="modified residue" description="N6-succinyllysine; alternate" evidence="4">
    <location>
        <position position="78"/>
    </location>
</feature>
<feature type="modified residue" description="N6-acetyllysine; alternate" evidence="4">
    <location>
        <position position="85"/>
    </location>
</feature>
<feature type="modified residue" description="N6-succinyllysine; alternate" evidence="4">
    <location>
        <position position="85"/>
    </location>
</feature>
<feature type="modified residue" description="N6-acetyllysine; alternate" evidence="4">
    <location>
        <position position="95"/>
    </location>
</feature>
<feature type="modified residue" description="N6-succinyllysine; alternate" evidence="4">
    <location>
        <position position="95"/>
    </location>
</feature>
<feature type="modified residue" description="N6-acetyllysine" evidence="1">
    <location>
        <position position="117"/>
    </location>
</feature>
<feature type="modified residue" description="N6-acetyllysine; alternate" evidence="4">
    <location>
        <position position="144"/>
    </location>
</feature>
<feature type="modified residue" description="N6-succinyllysine; alternate" evidence="4">
    <location>
        <position position="144"/>
    </location>
</feature>
<feature type="modified residue" description="N6-acetyllysine; alternate" evidence="4">
    <location>
        <position position="149"/>
    </location>
</feature>
<feature type="modified residue" description="N6-succinyllysine; alternate" evidence="4">
    <location>
        <position position="149"/>
    </location>
</feature>
<feature type="sequence conflict" description="In Ref. 1; BAA00911." evidence="6" ref="1">
    <original>I</original>
    <variation>D</variation>
    <location>
        <position position="79"/>
    </location>
</feature>
<feature type="sequence conflict" description="In Ref. 1; BAA00911." evidence="6" ref="1">
    <original>P</original>
    <variation>L</variation>
    <location>
        <position position="141"/>
    </location>
</feature>
<proteinExistence type="evidence at protein level"/>